<name>PROT2_ORYSJ</name>
<gene>
    <name type="ordered locus">LOC_Os07g01090</name>
    <name type="ORF">B1026C12.12</name>
</gene>
<feature type="chain" id="PRO_0000418997" description="Probable proline transporter 2">
    <location>
        <begin position="1"/>
        <end position="434"/>
    </location>
</feature>
<feature type="transmembrane region" description="Helical" evidence="2">
    <location>
        <begin position="26"/>
        <end position="46"/>
    </location>
</feature>
<feature type="transmembrane region" description="Helical" evidence="2">
    <location>
        <begin position="49"/>
        <end position="69"/>
    </location>
</feature>
<feature type="transmembrane region" description="Helical" evidence="2">
    <location>
        <begin position="106"/>
        <end position="126"/>
    </location>
</feature>
<feature type="transmembrane region" description="Helical" evidence="2">
    <location>
        <begin position="149"/>
        <end position="169"/>
    </location>
</feature>
<feature type="transmembrane region" description="Helical" evidence="2">
    <location>
        <begin position="171"/>
        <end position="191"/>
    </location>
</feature>
<feature type="transmembrane region" description="Helical" evidence="2">
    <location>
        <begin position="213"/>
        <end position="233"/>
    </location>
</feature>
<feature type="transmembrane region" description="Helical" evidence="2">
    <location>
        <begin position="251"/>
        <end position="271"/>
    </location>
</feature>
<feature type="transmembrane region" description="Helical" evidence="2">
    <location>
        <begin position="297"/>
        <end position="317"/>
    </location>
</feature>
<feature type="transmembrane region" description="Helical" evidence="2">
    <location>
        <begin position="339"/>
        <end position="359"/>
    </location>
</feature>
<feature type="transmembrane region" description="Helical" evidence="2">
    <location>
        <begin position="362"/>
        <end position="382"/>
    </location>
</feature>
<feature type="transmembrane region" description="Helical" evidence="2">
    <location>
        <begin position="403"/>
        <end position="423"/>
    </location>
</feature>
<protein>
    <recommendedName>
        <fullName>Probable proline transporter 2</fullName>
    </recommendedName>
</protein>
<proteinExistence type="evidence at transcript level"/>
<evidence type="ECO:0000250" key="1"/>
<evidence type="ECO:0000255" key="2"/>
<evidence type="ECO:0000305" key="3"/>
<comment type="function">
    <text evidence="1">Proline transporter that mediates proline transport across the plasma membrane.</text>
</comment>
<comment type="subcellular location">
    <subcellularLocation>
        <location evidence="1">Cell membrane</location>
        <topology evidence="3">Multi-pass membrane protein</topology>
    </subcellularLocation>
</comment>
<comment type="similarity">
    <text evidence="3">Belongs to the amino acid/polyamine transporter 2 family. Amino acid/auxin permease (AAAP) (TC 2.A.18.3) subfamily.</text>
</comment>
<comment type="sequence caution" evidence="3">
    <conflict type="erroneous initiation">
        <sequence resource="EMBL-CDS" id="BAF20587"/>
    </conflict>
    <text>Extended N-terminus.</text>
</comment>
<accession>Q69LA1</accession>
<accession>Q0D986</accession>
<dbReference type="EMBL" id="AP005869">
    <property type="protein sequence ID" value="BAD31821.1"/>
    <property type="molecule type" value="Genomic_DNA"/>
</dbReference>
<dbReference type="EMBL" id="AP008213">
    <property type="protein sequence ID" value="BAF20587.2"/>
    <property type="status" value="ALT_INIT"/>
    <property type="molecule type" value="Genomic_DNA"/>
</dbReference>
<dbReference type="EMBL" id="AP014963">
    <property type="status" value="NOT_ANNOTATED_CDS"/>
    <property type="molecule type" value="Genomic_DNA"/>
</dbReference>
<dbReference type="EMBL" id="AK066298">
    <property type="protein sequence ID" value="BAG89899.1"/>
    <property type="molecule type" value="mRNA"/>
</dbReference>
<dbReference type="RefSeq" id="XP_015645166.1">
    <property type="nucleotide sequence ID" value="XM_015789680.1"/>
</dbReference>
<dbReference type="FunCoup" id="Q69LA1">
    <property type="interactions" value="169"/>
</dbReference>
<dbReference type="STRING" id="39947.Q69LA1"/>
<dbReference type="PaxDb" id="39947-Q69LA1"/>
<dbReference type="EnsemblPlants" id="Os07t0100800-01">
    <property type="protein sequence ID" value="Os07t0100800-01"/>
    <property type="gene ID" value="Os07g0100800"/>
</dbReference>
<dbReference type="Gramene" id="Os07t0100800-01">
    <property type="protein sequence ID" value="Os07t0100800-01"/>
    <property type="gene ID" value="Os07g0100800"/>
</dbReference>
<dbReference type="KEGG" id="dosa:Os07g0100800"/>
<dbReference type="eggNOG" id="KOG1303">
    <property type="taxonomic scope" value="Eukaryota"/>
</dbReference>
<dbReference type="HOGENOM" id="CLU_031160_3_0_1"/>
<dbReference type="InParanoid" id="Q69LA1"/>
<dbReference type="OrthoDB" id="40134at2759"/>
<dbReference type="Proteomes" id="UP000000763">
    <property type="component" value="Chromosome 7"/>
</dbReference>
<dbReference type="Proteomes" id="UP000059680">
    <property type="component" value="Chromosome 7"/>
</dbReference>
<dbReference type="GO" id="GO:0016020">
    <property type="term" value="C:membrane"/>
    <property type="evidence" value="ECO:0000318"/>
    <property type="project" value="GO_Central"/>
</dbReference>
<dbReference type="GO" id="GO:0005886">
    <property type="term" value="C:plasma membrane"/>
    <property type="evidence" value="ECO:0007669"/>
    <property type="project" value="UniProtKB-SubCell"/>
</dbReference>
<dbReference type="GO" id="GO:0015171">
    <property type="term" value="F:amino acid transmembrane transporter activity"/>
    <property type="evidence" value="ECO:0000318"/>
    <property type="project" value="GO_Central"/>
</dbReference>
<dbReference type="GO" id="GO:0003333">
    <property type="term" value="P:amino acid transmembrane transport"/>
    <property type="evidence" value="ECO:0000318"/>
    <property type="project" value="GO_Central"/>
</dbReference>
<dbReference type="InterPro" id="IPR013057">
    <property type="entry name" value="AA_transpt_TM"/>
</dbReference>
<dbReference type="PANTHER" id="PTHR48017">
    <property type="entry name" value="OS05G0424000 PROTEIN-RELATED"/>
    <property type="match status" value="1"/>
</dbReference>
<dbReference type="Pfam" id="PF01490">
    <property type="entry name" value="Aa_trans"/>
    <property type="match status" value="1"/>
</dbReference>
<organism>
    <name type="scientific">Oryza sativa subsp. japonica</name>
    <name type="common">Rice</name>
    <dbReference type="NCBI Taxonomy" id="39947"/>
    <lineage>
        <taxon>Eukaryota</taxon>
        <taxon>Viridiplantae</taxon>
        <taxon>Streptophyta</taxon>
        <taxon>Embryophyta</taxon>
        <taxon>Tracheophyta</taxon>
        <taxon>Spermatophyta</taxon>
        <taxon>Magnoliopsida</taxon>
        <taxon>Liliopsida</taxon>
        <taxon>Poales</taxon>
        <taxon>Poaceae</taxon>
        <taxon>BOP clade</taxon>
        <taxon>Oryzoideae</taxon>
        <taxon>Oryzeae</taxon>
        <taxon>Oryzinae</taxon>
        <taxon>Oryza</taxon>
        <taxon>Oryza sativa</taxon>
    </lineage>
</organism>
<keyword id="KW-0029">Amino-acid transport</keyword>
<keyword id="KW-1003">Cell membrane</keyword>
<keyword id="KW-0472">Membrane</keyword>
<keyword id="KW-1185">Reference proteome</keyword>
<keyword id="KW-0812">Transmembrane</keyword>
<keyword id="KW-1133">Transmembrane helix</keyword>
<keyword id="KW-0813">Transport</keyword>
<reference key="1">
    <citation type="journal article" date="2005" name="Nature">
        <title>The map-based sequence of the rice genome.</title>
        <authorList>
            <consortium name="International rice genome sequencing project (IRGSP)"/>
        </authorList>
    </citation>
    <scope>NUCLEOTIDE SEQUENCE [LARGE SCALE GENOMIC DNA]</scope>
    <source>
        <strain>cv. Nipponbare</strain>
    </source>
</reference>
<reference key="2">
    <citation type="journal article" date="2008" name="Nucleic Acids Res.">
        <title>The rice annotation project database (RAP-DB): 2008 update.</title>
        <authorList>
            <consortium name="The rice annotation project (RAP)"/>
        </authorList>
    </citation>
    <scope>GENOME REANNOTATION</scope>
    <source>
        <strain>cv. Nipponbare</strain>
    </source>
</reference>
<reference key="3">
    <citation type="journal article" date="2013" name="Rice">
        <title>Improvement of the Oryza sativa Nipponbare reference genome using next generation sequence and optical map data.</title>
        <authorList>
            <person name="Kawahara Y."/>
            <person name="de la Bastide M."/>
            <person name="Hamilton J.P."/>
            <person name="Kanamori H."/>
            <person name="McCombie W.R."/>
            <person name="Ouyang S."/>
            <person name="Schwartz D.C."/>
            <person name="Tanaka T."/>
            <person name="Wu J."/>
            <person name="Zhou S."/>
            <person name="Childs K.L."/>
            <person name="Davidson R.M."/>
            <person name="Lin H."/>
            <person name="Quesada-Ocampo L."/>
            <person name="Vaillancourt B."/>
            <person name="Sakai H."/>
            <person name="Lee S.S."/>
            <person name="Kim J."/>
            <person name="Numa H."/>
            <person name="Itoh T."/>
            <person name="Buell C.R."/>
            <person name="Matsumoto T."/>
        </authorList>
    </citation>
    <scope>GENOME REANNOTATION</scope>
    <source>
        <strain>cv. Nipponbare</strain>
    </source>
</reference>
<reference key="4">
    <citation type="journal article" date="2003" name="Science">
        <title>Collection, mapping, and annotation of over 28,000 cDNA clones from japonica rice.</title>
        <authorList>
            <consortium name="The rice full-length cDNA consortium"/>
        </authorList>
    </citation>
    <scope>NUCLEOTIDE SEQUENCE [LARGE SCALE MRNA]</scope>
    <source>
        <strain>cv. Nipponbare</strain>
    </source>
</reference>
<sequence length="434" mass="47664">MNIDMANSDDKALISEDTAHQISADPWYQVGFVLTTGVNSAYVLGYSGSVMVPLGWIGGTCGLILAAAISLYANALLARLHEIGGKRHIRYRDLAGHIYGRKMYSLTWALQYVNLFMINTGFIILAGQALKATYVLFRDDGVLKLPYCIALSGFVCALFAFGIPYLSALRIWLGFSTFFSLIYITIAFVLSLRDGITTPAKDYTIPGSHSARIFTTIGAVANLVFAYNTGMLPEIQATIRPPVVKNMEKALWFQFTVGSLPLYAVTFMGYWAYGSSTSSYLLNSVKGPVWVKAMANLSAFLQTVIALHIFASPMYEFLDTKYGSGHGGPFAIHNVMFRVGVRGGYLTVNTLVAAMLPFLGDFMSLTGALSTFPLTFVLANHMYLMVKRHKLSTLQISWHWLNVAGFSLLSIAAAVAALRLIMVDSRTYHLFADL</sequence>